<protein>
    <recommendedName>
        <fullName>Beta-adducin</fullName>
    </recommendedName>
    <alternativeName>
        <fullName>Adducin-63</fullName>
    </alternativeName>
    <alternativeName>
        <fullName>Erythrocyte adducin subunit beta</fullName>
    </alternativeName>
</protein>
<evidence type="ECO:0000250" key="1"/>
<evidence type="ECO:0000250" key="2">
    <source>
        <dbReference type="UniProtKB" id="P35612"/>
    </source>
</evidence>
<evidence type="ECO:0000250" key="3">
    <source>
        <dbReference type="UniProtKB" id="Q9QYB8"/>
    </source>
</evidence>
<evidence type="ECO:0000255" key="4"/>
<evidence type="ECO:0000256" key="5">
    <source>
        <dbReference type="SAM" id="MobiDB-lite"/>
    </source>
</evidence>
<evidence type="ECO:0000303" key="6">
    <source>
    </source>
</evidence>
<evidence type="ECO:0000305" key="7"/>
<evidence type="ECO:0007744" key="8">
    <source>
    </source>
</evidence>
<accession>Q05764</accession>
<dbReference type="EMBL" id="M63894">
    <property type="protein sequence ID" value="AAA40679.1"/>
    <property type="molecule type" value="mRNA"/>
</dbReference>
<dbReference type="EMBL" id="AF130338">
    <property type="protein sequence ID" value="AAF31764.1"/>
    <property type="molecule type" value="mRNA"/>
</dbReference>
<dbReference type="PIR" id="JQ1036">
    <property type="entry name" value="JQ1036"/>
</dbReference>
<dbReference type="RefSeq" id="NP_001103350.1">
    <property type="nucleotide sequence ID" value="NM_001109880.1"/>
</dbReference>
<dbReference type="RefSeq" id="NP_036623.1">
    <molecule id="Q05764-2"/>
    <property type="nucleotide sequence ID" value="NM_012491.2"/>
</dbReference>
<dbReference type="SMR" id="Q05764"/>
<dbReference type="BioGRID" id="246361">
    <property type="interactions" value="3"/>
</dbReference>
<dbReference type="FunCoup" id="Q05764">
    <property type="interactions" value="636"/>
</dbReference>
<dbReference type="IntAct" id="Q05764">
    <property type="interactions" value="1"/>
</dbReference>
<dbReference type="MINT" id="Q05764"/>
<dbReference type="STRING" id="10116.ENSRNOP00000021491"/>
<dbReference type="iPTMnet" id="Q05764"/>
<dbReference type="PhosphoSitePlus" id="Q05764"/>
<dbReference type="PaxDb" id="10116-ENSRNOP00000021491"/>
<dbReference type="Ensembl" id="ENSRNOT00000081173.2">
    <molecule id="Q05764-2"/>
    <property type="protein sequence ID" value="ENSRNOP00000073973.1"/>
    <property type="gene ID" value="ENSRNOG00000015903.7"/>
</dbReference>
<dbReference type="GeneID" id="24171"/>
<dbReference type="KEGG" id="rno:24171"/>
<dbReference type="UCSC" id="RGD:2042">
    <molecule id="Q05764-1"/>
    <property type="organism name" value="rat"/>
</dbReference>
<dbReference type="AGR" id="RGD:2042"/>
<dbReference type="CTD" id="119"/>
<dbReference type="RGD" id="2042">
    <property type="gene designation" value="Add2"/>
</dbReference>
<dbReference type="VEuPathDB" id="HostDB:ENSRNOG00000015903"/>
<dbReference type="eggNOG" id="KOG3699">
    <property type="taxonomic scope" value="Eukaryota"/>
</dbReference>
<dbReference type="GeneTree" id="ENSGT00940000159299"/>
<dbReference type="InParanoid" id="Q05764"/>
<dbReference type="OrthoDB" id="3238794at2759"/>
<dbReference type="PhylomeDB" id="Q05764"/>
<dbReference type="Reactome" id="R-RNO-5223345">
    <property type="pathway name" value="Miscellaneous transport and binding events"/>
</dbReference>
<dbReference type="PRO" id="PR:Q05764"/>
<dbReference type="Proteomes" id="UP000002494">
    <property type="component" value="Chromosome 4"/>
</dbReference>
<dbReference type="Bgee" id="ENSRNOG00000015903">
    <property type="expression patterns" value="Expressed in frontal cortex and 13 other cell types or tissues"/>
</dbReference>
<dbReference type="ExpressionAtlas" id="Q05764">
    <property type="expression patterns" value="baseline and differential"/>
</dbReference>
<dbReference type="GO" id="GO:0031410">
    <property type="term" value="C:cytoplasmic vesicle"/>
    <property type="evidence" value="ECO:0000250"/>
    <property type="project" value="UniProtKB"/>
</dbReference>
<dbReference type="GO" id="GO:0005856">
    <property type="term" value="C:cytoskeleton"/>
    <property type="evidence" value="ECO:0000318"/>
    <property type="project" value="GO_Central"/>
</dbReference>
<dbReference type="GO" id="GO:0008290">
    <property type="term" value="C:F-actin capping protein complex"/>
    <property type="evidence" value="ECO:0000266"/>
    <property type="project" value="RGD"/>
</dbReference>
<dbReference type="GO" id="GO:0098978">
    <property type="term" value="C:glutamatergic synapse"/>
    <property type="evidence" value="ECO:0000314"/>
    <property type="project" value="SynGO"/>
</dbReference>
<dbReference type="GO" id="GO:0016020">
    <property type="term" value="C:membrane"/>
    <property type="evidence" value="ECO:0000266"/>
    <property type="project" value="RGD"/>
</dbReference>
<dbReference type="GO" id="GO:0005886">
    <property type="term" value="C:plasma membrane"/>
    <property type="evidence" value="ECO:0000318"/>
    <property type="project" value="GO_Central"/>
</dbReference>
<dbReference type="GO" id="GO:0044853">
    <property type="term" value="C:plasma membrane raft"/>
    <property type="evidence" value="ECO:0000266"/>
    <property type="project" value="RGD"/>
</dbReference>
<dbReference type="GO" id="GO:0098794">
    <property type="term" value="C:postsynapse"/>
    <property type="evidence" value="ECO:0000314"/>
    <property type="project" value="SynGO"/>
</dbReference>
<dbReference type="GO" id="GO:0014069">
    <property type="term" value="C:postsynaptic density"/>
    <property type="evidence" value="ECO:0000266"/>
    <property type="project" value="RGD"/>
</dbReference>
<dbReference type="GO" id="GO:0003779">
    <property type="term" value="F:actin binding"/>
    <property type="evidence" value="ECO:0000266"/>
    <property type="project" value="RGD"/>
</dbReference>
<dbReference type="GO" id="GO:0051015">
    <property type="term" value="F:actin filament binding"/>
    <property type="evidence" value="ECO:0000266"/>
    <property type="project" value="RGD"/>
</dbReference>
<dbReference type="GO" id="GO:0005516">
    <property type="term" value="F:calmodulin binding"/>
    <property type="evidence" value="ECO:0007669"/>
    <property type="project" value="UniProtKB-KW"/>
</dbReference>
<dbReference type="GO" id="GO:0046983">
    <property type="term" value="F:protein dimerization activity"/>
    <property type="evidence" value="ECO:0000266"/>
    <property type="project" value="RGD"/>
</dbReference>
<dbReference type="GO" id="GO:0046982">
    <property type="term" value="F:protein heterodimerization activity"/>
    <property type="evidence" value="ECO:0000266"/>
    <property type="project" value="RGD"/>
</dbReference>
<dbReference type="GO" id="GO:0042803">
    <property type="term" value="F:protein homodimerization activity"/>
    <property type="evidence" value="ECO:0000266"/>
    <property type="project" value="RGD"/>
</dbReference>
<dbReference type="GO" id="GO:0019901">
    <property type="term" value="F:protein kinase binding"/>
    <property type="evidence" value="ECO:0000266"/>
    <property type="project" value="RGD"/>
</dbReference>
<dbReference type="GO" id="GO:0030507">
    <property type="term" value="F:spectrin binding"/>
    <property type="evidence" value="ECO:0000266"/>
    <property type="project" value="RGD"/>
</dbReference>
<dbReference type="GO" id="GO:0005200">
    <property type="term" value="F:structural constituent of cytoskeleton"/>
    <property type="evidence" value="ECO:0000266"/>
    <property type="project" value="RGD"/>
</dbReference>
<dbReference type="GO" id="GO:0051017">
    <property type="term" value="P:actin filament bundle assembly"/>
    <property type="evidence" value="ECO:0000266"/>
    <property type="project" value="RGD"/>
</dbReference>
<dbReference type="GO" id="GO:0051016">
    <property type="term" value="P:barbed-end actin filament capping"/>
    <property type="evidence" value="ECO:0000266"/>
    <property type="project" value="RGD"/>
</dbReference>
<dbReference type="GO" id="GO:0030097">
    <property type="term" value="P:hemopoiesis"/>
    <property type="evidence" value="ECO:0000266"/>
    <property type="project" value="RGD"/>
</dbReference>
<dbReference type="GO" id="GO:0050900">
    <property type="term" value="P:leukocyte migration"/>
    <property type="evidence" value="ECO:0000266"/>
    <property type="project" value="RGD"/>
</dbReference>
<dbReference type="GO" id="GO:0050901">
    <property type="term" value="P:leukocyte tethering or rolling"/>
    <property type="evidence" value="ECO:0000266"/>
    <property type="project" value="RGD"/>
</dbReference>
<dbReference type="GO" id="GO:0006811">
    <property type="term" value="P:monoatomic ion transport"/>
    <property type="evidence" value="ECO:0000315"/>
    <property type="project" value="RGD"/>
</dbReference>
<dbReference type="GO" id="GO:0065003">
    <property type="term" value="P:protein-containing complex assembly"/>
    <property type="evidence" value="ECO:0000250"/>
    <property type="project" value="UniProtKB"/>
</dbReference>
<dbReference type="GO" id="GO:0007416">
    <property type="term" value="P:synapse assembly"/>
    <property type="evidence" value="ECO:0000266"/>
    <property type="project" value="RGD"/>
</dbReference>
<dbReference type="CDD" id="cd00398">
    <property type="entry name" value="Aldolase_II"/>
    <property type="match status" value="1"/>
</dbReference>
<dbReference type="FunFam" id="3.40.225.10:FF:000004">
    <property type="entry name" value="gamma-adducin isoform X1"/>
    <property type="match status" value="1"/>
</dbReference>
<dbReference type="Gene3D" id="3.40.225.10">
    <property type="entry name" value="Class II aldolase/adducin N-terminal domain"/>
    <property type="match status" value="1"/>
</dbReference>
<dbReference type="InterPro" id="IPR051017">
    <property type="entry name" value="Aldolase-II_Adducin_sf"/>
</dbReference>
<dbReference type="InterPro" id="IPR001303">
    <property type="entry name" value="Aldolase_II/adducin_N"/>
</dbReference>
<dbReference type="InterPro" id="IPR036409">
    <property type="entry name" value="Aldolase_II/adducin_N_sf"/>
</dbReference>
<dbReference type="PANTHER" id="PTHR10672">
    <property type="entry name" value="ADDUCIN"/>
    <property type="match status" value="1"/>
</dbReference>
<dbReference type="PANTHER" id="PTHR10672:SF6">
    <property type="entry name" value="BETA-ADDUCIN"/>
    <property type="match status" value="1"/>
</dbReference>
<dbReference type="Pfam" id="PF00596">
    <property type="entry name" value="Aldolase_II"/>
    <property type="match status" value="1"/>
</dbReference>
<dbReference type="SMART" id="SM01007">
    <property type="entry name" value="Aldolase_II"/>
    <property type="match status" value="1"/>
</dbReference>
<dbReference type="SUPFAM" id="SSF53639">
    <property type="entry name" value="AraD/HMP-PK domain-like"/>
    <property type="match status" value="1"/>
</dbReference>
<keyword id="KW-0009">Actin-binding</keyword>
<keyword id="KW-0025">Alternative splicing</keyword>
<keyword id="KW-0112">Calmodulin-binding</keyword>
<keyword id="KW-1003">Cell membrane</keyword>
<keyword id="KW-0963">Cytoplasm</keyword>
<keyword id="KW-0206">Cytoskeleton</keyword>
<keyword id="KW-0472">Membrane</keyword>
<keyword id="KW-0597">Phosphoprotein</keyword>
<keyword id="KW-1185">Reference proteome</keyword>
<organism>
    <name type="scientific">Rattus norvegicus</name>
    <name type="common">Rat</name>
    <dbReference type="NCBI Taxonomy" id="10116"/>
    <lineage>
        <taxon>Eukaryota</taxon>
        <taxon>Metazoa</taxon>
        <taxon>Chordata</taxon>
        <taxon>Craniata</taxon>
        <taxon>Vertebrata</taxon>
        <taxon>Euteleostomi</taxon>
        <taxon>Mammalia</taxon>
        <taxon>Eutheria</taxon>
        <taxon>Euarchontoglires</taxon>
        <taxon>Glires</taxon>
        <taxon>Rodentia</taxon>
        <taxon>Myomorpha</taxon>
        <taxon>Muroidea</taxon>
        <taxon>Muridae</taxon>
        <taxon>Murinae</taxon>
        <taxon>Rattus</taxon>
    </lineage>
</organism>
<comment type="function">
    <text evidence="1">Membrane-cytoskeleton-associated protein that promotes the assembly of the spectrin-actin network. Binds to the erythrocyte membrane receptor SLC2A1/GLUT1 and may therefore provide a link between the spectrin cytoskeleton to the plasma membrane. Binds to calmodulin. Calmodulin binds preferentially to the beta subunit (By similarity).</text>
</comment>
<comment type="subunit">
    <text evidence="1">Heterodimer of an alpha and a beta subunit. Found in a complex with ADD2, DMTN and SLC2A1. Interacts with SLC2A1 (By similarity).</text>
</comment>
<comment type="subcellular location">
    <subcellularLocation>
        <location evidence="1">Cytoplasm</location>
        <location evidence="1">Cytoskeleton</location>
    </subcellularLocation>
    <subcellularLocation>
        <location evidence="1">Cell membrane</location>
        <topology evidence="1">Peripheral membrane protein</topology>
        <orientation evidence="1">Cytoplasmic side</orientation>
    </subcellularLocation>
</comment>
<comment type="alternative products">
    <event type="alternative splicing"/>
    <isoform>
        <id>Q05764-1</id>
        <name>1</name>
        <sequence type="displayed"/>
    </isoform>
    <isoform>
        <id>Q05764-2</id>
        <name>2</name>
        <name>Adducin 63</name>
        <sequence type="described" ref="VSP_000186 VSP_000187"/>
    </isoform>
    <text>Additional isoforms seem to exist.</text>
</comment>
<comment type="tissue specificity">
    <text>Found in liver, kidney, spleen, heart and brain.</text>
</comment>
<comment type="domain">
    <text>Each subunit is comprised of three regions: a NH2-terminal protease-resistant globular head region, a short connecting subdomain, and a protease-sensitive tail region.</text>
</comment>
<comment type="similarity">
    <text evidence="7">Belongs to the aldolase class II family. Adducin subfamily.</text>
</comment>
<proteinExistence type="evidence at protein level"/>
<feature type="chain" id="PRO_0000218535" description="Beta-adducin">
    <location>
        <begin position="1"/>
        <end position="725"/>
    </location>
</feature>
<feature type="region of interest" description="Disordered" evidence="5">
    <location>
        <begin position="1"/>
        <end position="22"/>
    </location>
</feature>
<feature type="region of interest" description="Interaction with calmodulin" evidence="4">
    <location>
        <begin position="425"/>
        <end position="444"/>
    </location>
</feature>
<feature type="region of interest" description="Disordered" evidence="5">
    <location>
        <begin position="525"/>
        <end position="725"/>
    </location>
</feature>
<feature type="region of interest" description="Interaction with calmodulin" evidence="4">
    <location>
        <begin position="703"/>
        <end position="720"/>
    </location>
</feature>
<feature type="compositionally biased region" description="Basic and acidic residues" evidence="5">
    <location>
        <begin position="566"/>
        <end position="588"/>
    </location>
</feature>
<feature type="compositionally biased region" description="Polar residues" evidence="5">
    <location>
        <begin position="596"/>
        <end position="621"/>
    </location>
</feature>
<feature type="compositionally biased region" description="Basic and acidic residues" evidence="5">
    <location>
        <begin position="622"/>
        <end position="631"/>
    </location>
</feature>
<feature type="compositionally biased region" description="Basic and acidic residues" evidence="5">
    <location>
        <begin position="639"/>
        <end position="654"/>
    </location>
</feature>
<feature type="compositionally biased region" description="Low complexity" evidence="5">
    <location>
        <begin position="687"/>
        <end position="700"/>
    </location>
</feature>
<feature type="compositionally biased region" description="Basic residues" evidence="5">
    <location>
        <begin position="701"/>
        <end position="725"/>
    </location>
</feature>
<feature type="modified residue" description="Phosphoserine" evidence="8">
    <location>
        <position position="11"/>
    </location>
</feature>
<feature type="modified residue" description="Phosphoserine" evidence="8">
    <location>
        <position position="25"/>
    </location>
</feature>
<feature type="modified residue" description="Phosphothreonine" evidence="2">
    <location>
        <position position="55"/>
    </location>
</feature>
<feature type="modified residue" description="Phosphoserine" evidence="8">
    <location>
        <position position="60"/>
    </location>
</feature>
<feature type="modified residue" description="Phosphoserine" evidence="3">
    <location>
        <position position="344"/>
    </location>
</feature>
<feature type="modified residue" description="Phosphoserine" evidence="8">
    <location>
        <position position="530"/>
    </location>
</feature>
<feature type="modified residue" description="Phosphoserine" evidence="8">
    <location>
        <position position="532"/>
    </location>
</feature>
<feature type="modified residue" description="Phosphothreonine" evidence="3">
    <location>
        <position position="533"/>
    </location>
</feature>
<feature type="modified residue" description="Phosphoserine" evidence="3">
    <location>
        <position position="535"/>
    </location>
</feature>
<feature type="modified residue" description="Phosphoserine" evidence="8">
    <location>
        <position position="594"/>
    </location>
</feature>
<feature type="modified residue" description="Phosphoserine" evidence="2">
    <location>
        <position position="598"/>
    </location>
</feature>
<feature type="modified residue" description="Phosphoserine" evidence="8">
    <location>
        <position position="602"/>
    </location>
</feature>
<feature type="modified residue" description="Phosphoserine" evidence="2">
    <location>
        <position position="606"/>
    </location>
</feature>
<feature type="modified residue" description="Phosphothreonine" evidence="2">
    <location>
        <position position="612"/>
    </location>
</feature>
<feature type="modified residue" description="Phosphoserine" evidence="8">
    <location>
        <position position="614"/>
    </location>
</feature>
<feature type="modified residue" description="Phosphoserine" evidence="8">
    <location>
        <position position="618"/>
    </location>
</feature>
<feature type="modified residue" description="Phosphoserine" evidence="3">
    <location>
        <position position="620"/>
    </location>
</feature>
<feature type="modified residue" description="Phosphothreonine" evidence="8">
    <location>
        <position position="674"/>
    </location>
</feature>
<feature type="modified residue" description="Phosphoserine" evidence="8">
    <location>
        <position position="678"/>
    </location>
</feature>
<feature type="modified residue" description="Phosphoserine" evidence="8">
    <location>
        <position position="685"/>
    </location>
</feature>
<feature type="modified residue" description="Phosphoserine" evidence="8">
    <location>
        <position position="688"/>
    </location>
</feature>
<feature type="modified residue" description="Phosphoserine" evidence="8">
    <location>
        <position position="692"/>
    </location>
</feature>
<feature type="modified residue" description="Phosphoserine" evidence="2">
    <location>
        <position position="696"/>
    </location>
</feature>
<feature type="modified residue" description="Phosphoserine" evidence="3">
    <location>
        <position position="698"/>
    </location>
</feature>
<feature type="modified residue" description="Phosphoserine" evidence="3">
    <location>
        <position position="700"/>
    </location>
</feature>
<feature type="modified residue" description="Phosphoserine" evidence="2">
    <location>
        <position position="702"/>
    </location>
</feature>
<feature type="modified residue" description="Phosphoserine" evidence="2">
    <location>
        <position position="712"/>
    </location>
</feature>
<feature type="splice variant" id="VSP_000186" description="In isoform 2." evidence="6">
    <original>STESQLASKGDADTKDELEETVPNPFSQLTD</original>
    <variation>VQQRLPPTEGEAYQTPGAGQGTPESSGPLTP</variation>
    <location>
        <begin position="532"/>
        <end position="562"/>
    </location>
</feature>
<feature type="splice variant" id="VSP_000187" description="In isoform 2." evidence="6">
    <location>
        <begin position="563"/>
        <end position="725"/>
    </location>
</feature>
<feature type="sequence variant" description="In strain: Milan hypertensive.">
    <original>R</original>
    <variation>Q</variation>
    <location>
        <position position="529"/>
    </location>
</feature>
<feature type="modified residue" description="Phosphothreonine" evidence="8">
    <location sequence="Q05764-2">
        <position position="561"/>
    </location>
</feature>
<reference key="1">
    <citation type="journal article" date="1991" name="Biochem. Biophys. Res. Commun.">
        <title>Molecular cloning of an adducin-like protein: evidence of a polymorphism in the normotensive and hypertensive rats of the Milan strain.</title>
        <authorList>
            <person name="Tripodi G."/>
            <person name="Piscone A."/>
            <person name="Borsani G."/>
            <person name="Tisminetzky S."/>
            <person name="Salardi S."/>
            <person name="Sidoli A."/>
            <person name="James P."/>
            <person name="Pongor S."/>
            <person name="Bianchi G."/>
            <person name="Baralle F.E."/>
        </authorList>
    </citation>
    <scope>NUCLEOTIDE SEQUENCE [MRNA] (ISOFORM 2)</scope>
    <source>
        <strain>Milan</strain>
        <tissue>Spleen</tissue>
    </source>
</reference>
<reference key="2">
    <citation type="journal article" date="2000" name="Mamm. Genome">
        <title>The mouse adducin gene family: alternative splicing and chromosomal localization.</title>
        <authorList>
            <person name="Suriyapperuma S.P."/>
            <person name="Lozovatsky L."/>
            <person name="Ciciotte S.L."/>
            <person name="Peters L.L."/>
            <person name="Gilligan D.M."/>
        </authorList>
    </citation>
    <scope>NUCLEOTIDE SEQUENCE [MRNA] OF 532-725 (ISOFORM 1)</scope>
    <source>
        <strain>Sprague-Dawley</strain>
    </source>
</reference>
<reference key="3">
    <citation type="journal article" date="2012" name="Nat. Commun.">
        <title>Quantitative maps of protein phosphorylation sites across 14 different rat organs and tissues.</title>
        <authorList>
            <person name="Lundby A."/>
            <person name="Secher A."/>
            <person name="Lage K."/>
            <person name="Nordsborg N.B."/>
            <person name="Dmytriyev A."/>
            <person name="Lundby C."/>
            <person name="Olsen J.V."/>
        </authorList>
    </citation>
    <scope>PHOSPHORYLATION [LARGE SCALE ANALYSIS] AT SER-11; SER-25; SER-60; SER-530; SER-532; SER-594; SER-602; SER-614; SER-618; THR-674; SER-678; SER-685; SER-688 AND SER-692</scope>
    <scope>PHOSPHORYLATION [LARGE SCALE ANALYSIS] AT THR-561 (ISOFORM 2)</scope>
    <scope>IDENTIFICATION BY MASS SPECTROMETRY [LARGE SCALE ANALYSIS]</scope>
</reference>
<name>ADDB_RAT</name>
<gene>
    <name type="primary">Add2</name>
</gene>
<sequence length="725" mass="80593">MSEDTVPEAASPPPSQGQHYFDRFSEDDPEYLRLRNRAADLRQDFNLMEQKKRVTMILQSPSFREELEGLIQEQMKKGNNSSNIWALRQIADFMASTSHAVFPASSMNFSMMTPINDLHTADSLNLAKGERLMRCKISSVYRLLDLYGWAQLSDTYVTLRVSKEQDHFLISPKGVSCSEVTASSLIKVNILGEVVEKGSSCFPVDTTGFSLHSAIYAARPDVRCAIHLHTPATAAVSAMKCGLLPVSHNALLVGDMAYYDFNGEMEQEADRINLQKCLGPTCKILVLRNHGMVALGDTVEEAFYKVFHLQAACEVQVSALSSAGGTENLILLEQEKHRPHEVGSVQWAGSTFGPMQKSRLGEHEFEALMRMLDNLGYRTGYTYRHPFVQEKTKHKSEVEIPATVTAFVFEEDGVPVPALRQHAQKQQKEKTRWLNTPNTYLRVNVADEVQRNMGSPRPKTTWMKADEVEKSSSGMPIRIENPNQFVPLYTDPQEVLDMRNKIREQNRQDIKSAGPQSQLLASVIAEKSRSPSTESQLASKGDADTKDELEETVPNPFSQLTDQELEEYKKEVERKKLEQEQEGEKDAATEEPGSPVKSTPASPVQSPTRAGTKSPAVSPSKASEDAKKTEVSEANTEPEPEKPEGVVVNGKEEEPCVEEVLSKGPGQMTTNADTDGDSYKDKTESVTSGPLSPEGSPSKSPSKKKKKFRTPSFLKKSKKKEKVES</sequence>